<reference key="1">
    <citation type="journal article" date="2005" name="J. Bacteriol.">
        <title>Insights into genome plasticity and pathogenicity of the plant pathogenic Bacterium Xanthomonas campestris pv. vesicatoria revealed by the complete genome sequence.</title>
        <authorList>
            <person name="Thieme F."/>
            <person name="Koebnik R."/>
            <person name="Bekel T."/>
            <person name="Berger C."/>
            <person name="Boch J."/>
            <person name="Buettner D."/>
            <person name="Caldana C."/>
            <person name="Gaigalat L."/>
            <person name="Goesmann A."/>
            <person name="Kay S."/>
            <person name="Kirchner O."/>
            <person name="Lanz C."/>
            <person name="Linke B."/>
            <person name="McHardy A.C."/>
            <person name="Meyer F."/>
            <person name="Mittenhuber G."/>
            <person name="Nies D.H."/>
            <person name="Niesbach-Kloesgen U."/>
            <person name="Patschkowski T."/>
            <person name="Rueckert C."/>
            <person name="Rupp O."/>
            <person name="Schneiker S."/>
            <person name="Schuster S.C."/>
            <person name="Vorhoelter F.J."/>
            <person name="Weber E."/>
            <person name="Puehler A."/>
            <person name="Bonas U."/>
            <person name="Bartels D."/>
            <person name="Kaiser O."/>
        </authorList>
    </citation>
    <scope>NUCLEOTIDE SEQUENCE [LARGE SCALE GENOMIC DNA]</scope>
    <source>
        <strain>85-10</strain>
    </source>
</reference>
<evidence type="ECO:0000255" key="1">
    <source>
        <dbReference type="HAMAP-Rule" id="MF_00070"/>
    </source>
</evidence>
<organism>
    <name type="scientific">Xanthomonas euvesicatoria pv. vesicatoria (strain 85-10)</name>
    <name type="common">Xanthomonas campestris pv. vesicatoria</name>
    <dbReference type="NCBI Taxonomy" id="316273"/>
    <lineage>
        <taxon>Bacteria</taxon>
        <taxon>Pseudomonadati</taxon>
        <taxon>Pseudomonadota</taxon>
        <taxon>Gammaproteobacteria</taxon>
        <taxon>Lysobacterales</taxon>
        <taxon>Lysobacteraceae</taxon>
        <taxon>Xanthomonas</taxon>
    </lineage>
</organism>
<feature type="chain" id="PRO_1000031956" description="2-keto-3-deoxygluconate permease">
    <location>
        <begin position="1"/>
        <end position="318"/>
    </location>
</feature>
<feature type="transmembrane region" description="Helical" evidence="1">
    <location>
        <begin position="10"/>
        <end position="30"/>
    </location>
</feature>
<feature type="transmembrane region" description="Helical" evidence="1">
    <location>
        <begin position="42"/>
        <end position="62"/>
    </location>
</feature>
<feature type="transmembrane region" description="Helical" evidence="1">
    <location>
        <begin position="82"/>
        <end position="102"/>
    </location>
</feature>
<feature type="transmembrane region" description="Helical" evidence="1">
    <location>
        <begin position="109"/>
        <end position="129"/>
    </location>
</feature>
<feature type="transmembrane region" description="Helical" evidence="1">
    <location>
        <begin position="139"/>
        <end position="159"/>
    </location>
</feature>
<feature type="transmembrane region" description="Helical" evidence="1">
    <location>
        <begin position="163"/>
        <end position="183"/>
    </location>
</feature>
<feature type="transmembrane region" description="Helical" evidence="1">
    <location>
        <begin position="194"/>
        <end position="214"/>
    </location>
</feature>
<feature type="transmembrane region" description="Helical" evidence="1">
    <location>
        <begin position="224"/>
        <end position="244"/>
    </location>
</feature>
<feature type="transmembrane region" description="Helical" evidence="1">
    <location>
        <begin position="257"/>
        <end position="277"/>
    </location>
</feature>
<feature type="transmembrane region" description="Helical" evidence="1">
    <location>
        <begin position="289"/>
        <end position="309"/>
    </location>
</feature>
<protein>
    <recommendedName>
        <fullName evidence="1">2-keto-3-deoxygluconate permease</fullName>
        <shortName evidence="1">KDG permease</shortName>
    </recommendedName>
</protein>
<accession>Q3BYT6</accession>
<sequence>MHIKATVERLPGGMMLVPLLLGAVCHTLWPQAGSTLGSFSNGLISGTVPILAVWFFCMGATIQLRASGRVLRRSGSLVLTKIAMAWLVAVLCAPLLPIGGVPSGPLAGLSVLALVAAMDMTNGGLYAALMQQYGSSEDAGAVVLMSLESGPLISMLILGASGLASFDPLLFVGAVLPLLLGFALGNLDAQLRQFFAQATTTLVPFFGFALGNTLDLSTIAHTGASGVLLGVAVIVITGLPLLLADRWIGGGNGTAGVAASSTAGAAVATPALIAGMAPQFAPAAPAATALVASAVIVTSLLVPLLTALYARRGVARSG</sequence>
<proteinExistence type="inferred from homology"/>
<dbReference type="EMBL" id="AM039952">
    <property type="protein sequence ID" value="CAJ21977.1"/>
    <property type="molecule type" value="Genomic_DNA"/>
</dbReference>
<dbReference type="RefSeq" id="WP_011346041.1">
    <property type="nucleotide sequence ID" value="NZ_CP017190.1"/>
</dbReference>
<dbReference type="STRING" id="456327.BJD11_21145"/>
<dbReference type="KEGG" id="xcv:XCV0346"/>
<dbReference type="eggNOG" id="ENOG502Z7JT">
    <property type="taxonomic scope" value="Bacteria"/>
</dbReference>
<dbReference type="HOGENOM" id="CLU_057476_0_1_6"/>
<dbReference type="Proteomes" id="UP000007069">
    <property type="component" value="Chromosome"/>
</dbReference>
<dbReference type="GO" id="GO:0005886">
    <property type="term" value="C:plasma membrane"/>
    <property type="evidence" value="ECO:0007669"/>
    <property type="project" value="UniProtKB-SubCell"/>
</dbReference>
<dbReference type="GO" id="GO:0015649">
    <property type="term" value="F:2-keto-3-deoxygluconate:proton symporter activity"/>
    <property type="evidence" value="ECO:0007669"/>
    <property type="project" value="UniProtKB-UniRule"/>
</dbReference>
<dbReference type="HAMAP" id="MF_00070">
    <property type="entry name" value="KdgT"/>
    <property type="match status" value="1"/>
</dbReference>
<dbReference type="InterPro" id="IPR004684">
    <property type="entry name" value="2keto-3dGluconate_permease"/>
</dbReference>
<dbReference type="InterPro" id="IPR018395">
    <property type="entry name" value="2keto-3dGluconate_permease_sub"/>
</dbReference>
<dbReference type="NCBIfam" id="TIGR00793">
    <property type="entry name" value="kdgT"/>
    <property type="match status" value="1"/>
</dbReference>
<dbReference type="Pfam" id="PF03812">
    <property type="entry name" value="KdgT"/>
    <property type="match status" value="1"/>
</dbReference>
<gene>
    <name evidence="1" type="primary">kdgT</name>
    <name type="ordered locus">XCV0346</name>
</gene>
<keyword id="KW-0997">Cell inner membrane</keyword>
<keyword id="KW-1003">Cell membrane</keyword>
<keyword id="KW-0472">Membrane</keyword>
<keyword id="KW-0762">Sugar transport</keyword>
<keyword id="KW-0769">Symport</keyword>
<keyword id="KW-0812">Transmembrane</keyword>
<keyword id="KW-1133">Transmembrane helix</keyword>
<keyword id="KW-0813">Transport</keyword>
<name>KDGT_XANE5</name>
<comment type="function">
    <text evidence="1">Catalyzes the proton-dependent uptake of 2-keto-3-deoxygluconate (KDG) into the cell.</text>
</comment>
<comment type="catalytic activity">
    <reaction evidence="1">
        <text>2-dehydro-3-deoxy-D-gluconate(in) + H(+)(in) = 2-dehydro-3-deoxy-D-gluconate(out) + H(+)(out)</text>
        <dbReference type="Rhea" id="RHEA:29943"/>
        <dbReference type="ChEBI" id="CHEBI:15378"/>
        <dbReference type="ChEBI" id="CHEBI:57990"/>
    </reaction>
    <physiologicalReaction direction="right-to-left" evidence="1">
        <dbReference type="Rhea" id="RHEA:29945"/>
    </physiologicalReaction>
</comment>
<comment type="subcellular location">
    <subcellularLocation>
        <location evidence="1">Cell inner membrane</location>
        <topology evidence="1">Multi-pass membrane protein</topology>
    </subcellularLocation>
</comment>
<comment type="similarity">
    <text evidence="1">Belongs to the KdgT transporter family.</text>
</comment>